<keyword id="KW-0496">Mitochondrion</keyword>
<evidence type="ECO:0000256" key="1">
    <source>
        <dbReference type="SAM" id="MobiDB-lite"/>
    </source>
</evidence>
<evidence type="ECO:0000305" key="2"/>
<reference key="1">
    <citation type="journal article" date="1992" name="J. Mol. Biol.">
        <title>Gene organization deduced from the complete sequence of liverwort Marchantia polymorpha mitochondrial DNA. A primitive form of plant mitochondrial genome.</title>
        <authorList>
            <person name="Oda K."/>
            <person name="Yamato K."/>
            <person name="Ohta E."/>
            <person name="Nakamura Y."/>
            <person name="Takemura M."/>
            <person name="Nozato N."/>
            <person name="Akashi K."/>
            <person name="Kanegae T."/>
            <person name="Ogura Y."/>
            <person name="Kohchi T."/>
            <person name="Ohyama K."/>
        </authorList>
    </citation>
    <scope>NUCLEOTIDE SEQUENCE [GENOMIC DNA]</scope>
</reference>
<feature type="chain" id="PRO_0000196833" description="Uncharacterized mitochondrial protein ymf2">
    <location>
        <begin position="1"/>
        <end position="322"/>
    </location>
</feature>
<feature type="region of interest" description="Disordered" evidence="1">
    <location>
        <begin position="174"/>
        <end position="207"/>
    </location>
</feature>
<feature type="compositionally biased region" description="Polar residues" evidence="1">
    <location>
        <begin position="184"/>
        <end position="195"/>
    </location>
</feature>
<name>YMF02_MARPO</name>
<protein>
    <recommendedName>
        <fullName>Uncharacterized mitochondrial protein ymf2</fullName>
    </recommendedName>
    <alternativeName>
        <fullName>ORF322</fullName>
    </alternativeName>
</protein>
<proteinExistence type="predicted"/>
<gene>
    <name type="primary">YMF2</name>
</gene>
<sequence length="322" mass="37031">MGDFSYLESFCGVLCFFFFCTFFLSFHHRRDSLARHKFSFFVFHKQRRRELIISSLRRNNLNWSRCFLVRALPSRLITVGHDFRKAPVNMKISHGGVCIFIMGVILSNAKKIQFTGKTPLGSELHIGKVRSTLRGIDQLHGPTFHSICGNFIIYKPSLKTPFMFEHDGSRPALLQSRPTEGAKVSTNGRGFSSRPTGEGNFFGPKGRRPEMALGFPHTSLPLRKKGFTVLEHNSFSHWLTMFPEKRFYFSNQETSTTKVAIHTNLFTDLYALIGTGSFETGWYMTVIKLPFIFYIWIGFIMASLGGLLSLFRKLTFYRLDWN</sequence>
<comment type="subcellular location">
    <subcellularLocation>
        <location evidence="2">Mitochondrion</location>
    </subcellularLocation>
</comment>
<organism>
    <name type="scientific">Marchantia polymorpha</name>
    <name type="common">Common liverwort</name>
    <name type="synonym">Marchantia aquatica</name>
    <dbReference type="NCBI Taxonomy" id="3197"/>
    <lineage>
        <taxon>Eukaryota</taxon>
        <taxon>Viridiplantae</taxon>
        <taxon>Streptophyta</taxon>
        <taxon>Embryophyta</taxon>
        <taxon>Marchantiophyta</taxon>
        <taxon>Marchantiopsida</taxon>
        <taxon>Marchantiidae</taxon>
        <taxon>Marchantiales</taxon>
        <taxon>Marchantiaceae</taxon>
        <taxon>Marchantia</taxon>
    </lineage>
</organism>
<accession>P38451</accession>
<dbReference type="EMBL" id="M68929">
    <property type="protein sequence ID" value="AAC09466.1"/>
    <property type="molecule type" value="Genomic_DNA"/>
</dbReference>
<dbReference type="PIR" id="S26012">
    <property type="entry name" value="S26012"/>
</dbReference>
<dbReference type="GO" id="GO:0005739">
    <property type="term" value="C:mitochondrion"/>
    <property type="evidence" value="ECO:0007669"/>
    <property type="project" value="UniProtKB-SubCell"/>
</dbReference>
<dbReference type="GO" id="GO:0017004">
    <property type="term" value="P:cytochrome complex assembly"/>
    <property type="evidence" value="ECO:0007669"/>
    <property type="project" value="InterPro"/>
</dbReference>
<dbReference type="InterPro" id="IPR032523">
    <property type="entry name" value="CcmF_C"/>
</dbReference>
<dbReference type="InterPro" id="IPR044955">
    <property type="entry name" value="CCMFC"/>
</dbReference>
<dbReference type="PANTHER" id="PTHR36010">
    <property type="entry name" value="CYTOCHROME C BIOGENESIS CCMF C-TERMINAL-LIKE MITOCHONDRIAL PROTEIN-RELATED"/>
    <property type="match status" value="1"/>
</dbReference>
<dbReference type="PANTHER" id="PTHR36010:SF1">
    <property type="entry name" value="CYTOCHROME C BIOGENESIS CCMF C-TERMINAL-LIKE MITOCHONDRIAL PROTEIN-RELATED"/>
    <property type="match status" value="1"/>
</dbReference>
<dbReference type="Pfam" id="PF16327">
    <property type="entry name" value="CcmF_C"/>
    <property type="match status" value="1"/>
</dbReference>
<geneLocation type="mitochondrion"/>